<proteinExistence type="evidence at transcript level"/>
<dbReference type="EMBL" id="L26398">
    <property type="protein sequence ID" value="AAL31316.1"/>
    <property type="molecule type" value="mRNA"/>
</dbReference>
<dbReference type="EMBL" id="CH473960">
    <property type="protein sequence ID" value="EDM16889.1"/>
    <property type="molecule type" value="Genomic_DNA"/>
</dbReference>
<dbReference type="EMBL" id="BC061822">
    <property type="protein sequence ID" value="AAH61822.1"/>
    <property type="molecule type" value="mRNA"/>
</dbReference>
<dbReference type="RefSeq" id="NP_665723.1">
    <property type="nucleotide sequence ID" value="NM_145780.2"/>
</dbReference>
<dbReference type="RefSeq" id="XP_008763438.1">
    <property type="nucleotide sequence ID" value="XM_008765216.2"/>
</dbReference>
<dbReference type="RefSeq" id="XP_017450160.1">
    <property type="nucleotide sequence ID" value="XM_017594671.3"/>
</dbReference>
<dbReference type="RefSeq" id="XP_038934386.1">
    <property type="nucleotide sequence ID" value="XM_039078458.1"/>
</dbReference>
<dbReference type="RefSeq" id="XP_038934387.1">
    <property type="nucleotide sequence ID" value="XM_039078459.2"/>
</dbReference>
<dbReference type="SMR" id="Q8VIJ4"/>
<dbReference type="FunCoup" id="Q8VIJ4">
    <property type="interactions" value="3987"/>
</dbReference>
<dbReference type="STRING" id="10116.ENSRNOP00000071901"/>
<dbReference type="BindingDB" id="Q8VIJ4"/>
<dbReference type="PhosphoSitePlus" id="Q8VIJ4"/>
<dbReference type="PaxDb" id="10116-ENSRNOP00000009578"/>
<dbReference type="Ensembl" id="ENSRNOT00000009578.5">
    <property type="protein sequence ID" value="ENSRNOP00000009578.1"/>
    <property type="gene ID" value="ENSRNOG00000006983.8"/>
</dbReference>
<dbReference type="GeneID" id="252924"/>
<dbReference type="KEGG" id="rno:252924"/>
<dbReference type="UCSC" id="RGD:3200">
    <property type="organism name" value="rat"/>
</dbReference>
<dbReference type="AGR" id="RGD:3200"/>
<dbReference type="CTD" id="7181"/>
<dbReference type="RGD" id="3200">
    <property type="gene designation" value="Nr2c1"/>
</dbReference>
<dbReference type="eggNOG" id="KOG3575">
    <property type="taxonomic scope" value="Eukaryota"/>
</dbReference>
<dbReference type="GeneTree" id="ENSGT00940000158165"/>
<dbReference type="InParanoid" id="Q8VIJ4"/>
<dbReference type="OMA" id="NCGELCV"/>
<dbReference type="OrthoDB" id="10024684at2759"/>
<dbReference type="PhylomeDB" id="Q8VIJ4"/>
<dbReference type="TreeFam" id="TF316650"/>
<dbReference type="Reactome" id="R-RNO-383280">
    <property type="pathway name" value="Nuclear Receptor transcription pathway"/>
</dbReference>
<dbReference type="PRO" id="PR:Q8VIJ4"/>
<dbReference type="Proteomes" id="UP000002494">
    <property type="component" value="Chromosome 7"/>
</dbReference>
<dbReference type="Proteomes" id="UP000234681">
    <property type="component" value="Chromosome 7"/>
</dbReference>
<dbReference type="Bgee" id="ENSRNOG00000006983">
    <property type="expression patterns" value="Expressed in testis and 19 other cell types or tissues"/>
</dbReference>
<dbReference type="GO" id="GO:0005634">
    <property type="term" value="C:nucleus"/>
    <property type="evidence" value="ECO:0000266"/>
    <property type="project" value="RGD"/>
</dbReference>
<dbReference type="GO" id="GO:0016605">
    <property type="term" value="C:PML body"/>
    <property type="evidence" value="ECO:0000266"/>
    <property type="project" value="RGD"/>
</dbReference>
<dbReference type="GO" id="GO:0003677">
    <property type="term" value="F:DNA binding"/>
    <property type="evidence" value="ECO:0000266"/>
    <property type="project" value="RGD"/>
</dbReference>
<dbReference type="GO" id="GO:0001227">
    <property type="term" value="F:DNA-binding transcription repressor activity, RNA polymerase II-specific"/>
    <property type="evidence" value="ECO:0000266"/>
    <property type="project" value="RGD"/>
</dbReference>
<dbReference type="GO" id="GO:0042826">
    <property type="term" value="F:histone deacetylase binding"/>
    <property type="evidence" value="ECO:0000266"/>
    <property type="project" value="RGD"/>
</dbReference>
<dbReference type="GO" id="GO:0004879">
    <property type="term" value="F:nuclear receptor activity"/>
    <property type="evidence" value="ECO:0000318"/>
    <property type="project" value="GO_Central"/>
</dbReference>
<dbReference type="GO" id="GO:0042803">
    <property type="term" value="F:protein homodimerization activity"/>
    <property type="evidence" value="ECO:0000266"/>
    <property type="project" value="RGD"/>
</dbReference>
<dbReference type="GO" id="GO:0000978">
    <property type="term" value="F:RNA polymerase II cis-regulatory region sequence-specific DNA binding"/>
    <property type="evidence" value="ECO:0000266"/>
    <property type="project" value="RGD"/>
</dbReference>
<dbReference type="GO" id="GO:1990837">
    <property type="term" value="F:sequence-specific double-stranded DNA binding"/>
    <property type="evidence" value="ECO:0000266"/>
    <property type="project" value="RGD"/>
</dbReference>
<dbReference type="GO" id="GO:0008270">
    <property type="term" value="F:zinc ion binding"/>
    <property type="evidence" value="ECO:0007669"/>
    <property type="project" value="UniProtKB-KW"/>
</dbReference>
<dbReference type="GO" id="GO:0030154">
    <property type="term" value="P:cell differentiation"/>
    <property type="evidence" value="ECO:0000318"/>
    <property type="project" value="GO_Central"/>
</dbReference>
<dbReference type="GO" id="GO:0045892">
    <property type="term" value="P:negative regulation of DNA-templated transcription"/>
    <property type="evidence" value="ECO:0000266"/>
    <property type="project" value="RGD"/>
</dbReference>
<dbReference type="GO" id="GO:0000122">
    <property type="term" value="P:negative regulation of transcription by RNA polymerase II"/>
    <property type="evidence" value="ECO:0000266"/>
    <property type="project" value="RGD"/>
</dbReference>
<dbReference type="GO" id="GO:0048386">
    <property type="term" value="P:positive regulation of retinoic acid receptor signaling pathway"/>
    <property type="evidence" value="ECO:0000266"/>
    <property type="project" value="RGD"/>
</dbReference>
<dbReference type="GO" id="GO:0006357">
    <property type="term" value="P:regulation of transcription by RNA polymerase II"/>
    <property type="evidence" value="ECO:0000318"/>
    <property type="project" value="GO_Central"/>
</dbReference>
<dbReference type="CDD" id="cd06967">
    <property type="entry name" value="NR_DBD_TR2_like"/>
    <property type="match status" value="1"/>
</dbReference>
<dbReference type="CDD" id="cd06952">
    <property type="entry name" value="NR_LBD_TR2_like"/>
    <property type="match status" value="1"/>
</dbReference>
<dbReference type="FunFam" id="1.10.565.10:FF:000012">
    <property type="entry name" value="Nuclear receptor subfamily 2 group C member 1"/>
    <property type="match status" value="1"/>
</dbReference>
<dbReference type="FunFam" id="3.30.50.10:FF:000015">
    <property type="entry name" value="Nuclear receptor subfamily 2, group C, member 1"/>
    <property type="match status" value="1"/>
</dbReference>
<dbReference type="Gene3D" id="3.30.50.10">
    <property type="entry name" value="Erythroid Transcription Factor GATA-1, subunit A"/>
    <property type="match status" value="1"/>
</dbReference>
<dbReference type="Gene3D" id="1.10.565.10">
    <property type="entry name" value="Retinoid X Receptor"/>
    <property type="match status" value="1"/>
</dbReference>
<dbReference type="InterPro" id="IPR035500">
    <property type="entry name" value="NHR-like_dom_sf"/>
</dbReference>
<dbReference type="InterPro" id="IPR048245">
    <property type="entry name" value="NR2C1/2-like_DBD"/>
</dbReference>
<dbReference type="InterPro" id="IPR048246">
    <property type="entry name" value="NR2C1/2-like_LBD"/>
</dbReference>
<dbReference type="InterPro" id="IPR000536">
    <property type="entry name" value="Nucl_hrmn_rcpt_lig-bd"/>
</dbReference>
<dbReference type="InterPro" id="IPR050274">
    <property type="entry name" value="Nuclear_hormone_rcpt_NR2"/>
</dbReference>
<dbReference type="InterPro" id="IPR001723">
    <property type="entry name" value="Nuclear_hrmn_rcpt"/>
</dbReference>
<dbReference type="InterPro" id="IPR001628">
    <property type="entry name" value="Znf_hrmn_rcpt"/>
</dbReference>
<dbReference type="InterPro" id="IPR013088">
    <property type="entry name" value="Znf_NHR/GATA"/>
</dbReference>
<dbReference type="PANTHER" id="PTHR24083">
    <property type="entry name" value="NUCLEAR HORMONE RECEPTOR"/>
    <property type="match status" value="1"/>
</dbReference>
<dbReference type="Pfam" id="PF00104">
    <property type="entry name" value="Hormone_recep"/>
    <property type="match status" value="1"/>
</dbReference>
<dbReference type="Pfam" id="PF00105">
    <property type="entry name" value="zf-C4"/>
    <property type="match status" value="1"/>
</dbReference>
<dbReference type="PRINTS" id="PR00398">
    <property type="entry name" value="STRDHORMONER"/>
</dbReference>
<dbReference type="PRINTS" id="PR00047">
    <property type="entry name" value="STROIDFINGER"/>
</dbReference>
<dbReference type="SMART" id="SM00430">
    <property type="entry name" value="HOLI"/>
    <property type="match status" value="1"/>
</dbReference>
<dbReference type="SMART" id="SM00399">
    <property type="entry name" value="ZnF_C4"/>
    <property type="match status" value="1"/>
</dbReference>
<dbReference type="SUPFAM" id="SSF57716">
    <property type="entry name" value="Glucocorticoid receptor-like (DNA-binding domain)"/>
    <property type="match status" value="1"/>
</dbReference>
<dbReference type="SUPFAM" id="SSF48508">
    <property type="entry name" value="Nuclear receptor ligand-binding domain"/>
    <property type="match status" value="1"/>
</dbReference>
<dbReference type="PROSITE" id="PS51843">
    <property type="entry name" value="NR_LBD"/>
    <property type="match status" value="1"/>
</dbReference>
<dbReference type="PROSITE" id="PS00031">
    <property type="entry name" value="NUCLEAR_REC_DBD_1"/>
    <property type="match status" value="1"/>
</dbReference>
<dbReference type="PROSITE" id="PS51030">
    <property type="entry name" value="NUCLEAR_REC_DBD_2"/>
    <property type="match status" value="1"/>
</dbReference>
<feature type="chain" id="PRO_0000369405" description="Nuclear receptor subfamily 2 group C member 1">
    <location>
        <begin position="1"/>
        <end position="590"/>
    </location>
</feature>
<feature type="domain" description="NR LBD" evidence="5">
    <location>
        <begin position="333"/>
        <end position="577"/>
    </location>
</feature>
<feature type="DNA-binding region" description="Nuclear receptor" evidence="4">
    <location>
        <begin position="98"/>
        <end position="173"/>
    </location>
</feature>
<feature type="zinc finger region" description="NR C4-type" evidence="4">
    <location>
        <begin position="101"/>
        <end position="121"/>
    </location>
</feature>
<feature type="zinc finger region" description="NR C4-type" evidence="4">
    <location>
        <begin position="137"/>
        <end position="156"/>
    </location>
</feature>
<feature type="region of interest" description="Required for interaction with KAT2B" evidence="1">
    <location>
        <begin position="1"/>
        <end position="166"/>
    </location>
</feature>
<feature type="region of interest" description="Required for interaction with NRIP1" evidence="1">
    <location>
        <begin position="571"/>
        <end position="590"/>
    </location>
</feature>
<feature type="modified residue" description="Phosphoserine" evidence="3">
    <location>
        <position position="185"/>
    </location>
</feature>
<feature type="modified residue" description="Phosphoserine" evidence="2">
    <location>
        <position position="203"/>
    </location>
</feature>
<feature type="modified residue" description="Phosphothreonine" evidence="2">
    <location>
        <position position="208"/>
    </location>
</feature>
<feature type="modified residue" description="Phosphothreonine; by MAPK1" evidence="3">
    <location>
        <position position="210"/>
    </location>
</feature>
<feature type="modified residue" description="Phosphoserine; by PKC" evidence="3">
    <location>
        <position position="568"/>
    </location>
</feature>
<feature type="cross-link" description="Glycyl lysine isopeptide (Lys-Gly) (interchain with G-Cter in SUMO); alternate" evidence="1">
    <location>
        <position position="238"/>
    </location>
</feature>
<feature type="cross-link" description="Glycyl lysine isopeptide (Lys-Gly) (interchain with G-Cter in SUMO2); alternate" evidence="2">
    <location>
        <position position="238"/>
    </location>
</feature>
<feature type="cross-link" description="Glycyl lysine isopeptide (Lys-Gly) (interchain with G-Cter in SUMO2)" evidence="2">
    <location>
        <position position="575"/>
    </location>
</feature>
<name>NR2C1_RAT</name>
<gene>
    <name type="primary">Nr2c1</name>
    <name type="synonym">Tr2</name>
</gene>
<comment type="function">
    <text evidence="1">Orphan nuclear receptor. Binds the IR7 element in the promoter of its own gene in an autoregulatory negative feedback mechanism. Primarily repressor of a broad range of genes including ESR1 and RARB. Together with NR2C2, forms the core of the DRED (direct repeat erythroid-definitive) complex that represses embryonic and fetal globin transcription. Binds to hormone response elements (HREs) consisting of two 5'-AGGTCA-3' half site direct repeat consensus sequences. Also activator of OCT4 gene expression. Plays a fundamental role in early embryogenesis and regulates embryonic stem cell proliferation and differentiation. Mediator of retinoic acid-regulated preadipocyte proliferation (By similarity).</text>
</comment>
<comment type="subunit">
    <text evidence="1">Homodimer (By similarity). Heterodimer; with NR2C2 which is required for chromatin remodeling and for binding to promoter regions such as globin DR1 repeats (By similarity). Interacts with ESR1; the interaction prevents homodimerization of ESR1 and suppresses its transcriptional activity and cell growth. Interacts with NRIP1 (via its LXXLL motifs); the interaction provides corepressor activity. Interacts with HDAC3 (via the DNA-binding domain); the interaction recruits phosphorylated NR2C1 to PML bodies for sumoylation. Interacts with HDAC4 (via the DNA-binding domain). Interacts with PIAS1; the interaction is required for sumoylation of NR2C1. Interacts with UBE2I; the interaction is required for sumoylation of NR2C1. Interacts with KAT2B; the interaction acts as a corepressor of gene expression (By similarity).</text>
</comment>
<comment type="subcellular location">
    <subcellularLocation>
        <location evidence="4">Nucleus</location>
    </subcellularLocation>
    <subcellularLocation>
        <location evidence="1">Nucleus</location>
        <location evidence="1">PML body</location>
    </subcellularLocation>
    <text evidence="1">Recruited by HDAC3, after all-trans retinoic acid stimulated MAPK1-mediated Thr-210 phosphorylation, to PML bodies for subsequent sumoylation.</text>
</comment>
<comment type="PTM">
    <text evidence="1">Sumoylation requires both PIAS1 and UBE2I. Sumoylation appears to dissociate NR2C1 from the PML nuclear bodies. Enhances the interaction with NRIP1 but inhibits interaction with KAT2B. In proliferating cells, stimulation by all-trans retinoic acid, activation of MAPK1-mediated phosphorylation and recruitment to PML bodies with subsequent sumoylation, suppresses OCT4 expression (By similarity).</text>
</comment>
<comment type="PTM">
    <text evidence="1">Phosphorylated on several serine and threonine residues. Phosphorylation on Thr-210, stimulated by all-trans retinoic acid (atRA) mediates PML location and sumoylation in proliferating cells which then modulates its association with effector molecules, KAT2B and NRIP1. Phosphorylation on Ser-568 by PKC is important for protein stability and function as activator of RARB (By similarity).</text>
</comment>
<comment type="similarity">
    <text evidence="6">Belongs to the nuclear hormone receptor family. NR2 subfamily.</text>
</comment>
<keyword id="KW-0010">Activator</keyword>
<keyword id="KW-0238">DNA-binding</keyword>
<keyword id="KW-1017">Isopeptide bond</keyword>
<keyword id="KW-0479">Metal-binding</keyword>
<keyword id="KW-0539">Nucleus</keyword>
<keyword id="KW-0597">Phosphoprotein</keyword>
<keyword id="KW-0675">Receptor</keyword>
<keyword id="KW-1185">Reference proteome</keyword>
<keyword id="KW-0678">Repressor</keyword>
<keyword id="KW-0804">Transcription</keyword>
<keyword id="KW-0805">Transcription regulation</keyword>
<keyword id="KW-0832">Ubl conjugation</keyword>
<keyword id="KW-0862">Zinc</keyword>
<keyword id="KW-0863">Zinc-finger</keyword>
<accession>Q8VIJ4</accession>
<organism>
    <name type="scientific">Rattus norvegicus</name>
    <name type="common">Rat</name>
    <dbReference type="NCBI Taxonomy" id="10116"/>
    <lineage>
        <taxon>Eukaryota</taxon>
        <taxon>Metazoa</taxon>
        <taxon>Chordata</taxon>
        <taxon>Craniata</taxon>
        <taxon>Vertebrata</taxon>
        <taxon>Euteleostomi</taxon>
        <taxon>Mammalia</taxon>
        <taxon>Eutheria</taxon>
        <taxon>Euarchontoglires</taxon>
        <taxon>Glires</taxon>
        <taxon>Rodentia</taxon>
        <taxon>Myomorpha</taxon>
        <taxon>Muroidea</taxon>
        <taxon>Muridae</taxon>
        <taxon>Murinae</taxon>
        <taxon>Rattus</taxon>
    </lineage>
</organism>
<evidence type="ECO:0000250" key="1"/>
<evidence type="ECO:0000250" key="2">
    <source>
        <dbReference type="UniProtKB" id="P13056"/>
    </source>
</evidence>
<evidence type="ECO:0000250" key="3">
    <source>
        <dbReference type="UniProtKB" id="Q505F1"/>
    </source>
</evidence>
<evidence type="ECO:0000255" key="4">
    <source>
        <dbReference type="PROSITE-ProRule" id="PRU00407"/>
    </source>
</evidence>
<evidence type="ECO:0000255" key="5">
    <source>
        <dbReference type="PROSITE-ProRule" id="PRU01189"/>
    </source>
</evidence>
<evidence type="ECO:0000305" key="6"/>
<reference key="1">
    <citation type="journal article" date="1995" name="Endocr. J.">
        <title>Gene expression of the androgen repressed rat TR2 orphan receptor: a member of steroid receptor superfamily.</title>
        <authorList>
            <person name="Ideta R."/>
            <person name="Adachi K."/>
            <person name="Takeda H."/>
            <person name="Chang C."/>
            <person name="Yeh S."/>
            <person name="Lee Y."/>
            <person name="Su C."/>
        </authorList>
    </citation>
    <scope>NUCLEOTIDE SEQUENCE [MRNA]</scope>
    <source>
        <tissue>Testis</tissue>
    </source>
</reference>
<reference key="2">
    <citation type="submission" date="2005-09" db="EMBL/GenBank/DDBJ databases">
        <authorList>
            <person name="Mural R.J."/>
            <person name="Adams M.D."/>
            <person name="Myers E.W."/>
            <person name="Smith H.O."/>
            <person name="Venter J.C."/>
        </authorList>
    </citation>
    <scope>NUCLEOTIDE SEQUENCE [LARGE SCALE GENOMIC DNA]</scope>
    <source>
        <strain>Brown Norway</strain>
    </source>
</reference>
<reference key="3">
    <citation type="journal article" date="2004" name="Genome Res.">
        <title>The status, quality, and expansion of the NIH full-length cDNA project: the Mammalian Gene Collection (MGC).</title>
        <authorList>
            <consortium name="The MGC Project Team"/>
        </authorList>
    </citation>
    <scope>NUCLEOTIDE SEQUENCE [LARGE SCALE MRNA]</scope>
    <source>
        <tissue>Prostate</tissue>
    </source>
</reference>
<protein>
    <recommendedName>
        <fullName>Nuclear receptor subfamily 2 group C member 1</fullName>
    </recommendedName>
    <alternativeName>
        <fullName>Orphan nuclear receptor TR2</fullName>
    </alternativeName>
    <alternativeName>
        <fullName>Testicular receptor 2</fullName>
    </alternativeName>
</protein>
<sequence length="590" mass="65528">MATIEEIAHQIIDQQMGEIVTEQQTGQKIQIVTALDHSTQGKQFILANHEGSTPGKVFLTTPDAAGVNQLFFASPDLSTPHLQLLTENSPDQGPNKVFDLCVVCGDKASGRHYGAITCEGCKGFFKRSIRKNLVYSCRGSKDCIINKHHRNRCQYCRLQRCIAFGMKQDSVQCERKPIEVSREKSSNCAASTEKIYIRKDLRSPLAATPTFVTDSETARSTGLLDSGMFVNIHPSGIKTEPALLMTPDKAESCQGDLGTLASVVTSLANLGKAKDLSHCGGDLPVVQSLRNGDTSFGAFHQDIQTNGDVSRAFDNLAKALTPGENPACQSPGESMEGSTHLIAGEPSCMEREGPLLSDSHVVFRLTMPSPMPEYLNVHYIGESASRLLFLSMHWALSIPSFQALGQENSISLVKAYWNELFTLGLAQCWQVMNVATILATFVNCLHNSLQQDKMSPERRKLLMEHIFKLQEFCNSMVKLCIDGHEYAYLKAIVLFSPDHPGLENMELIEKFQEKAYVEFQDYITRTYPDDTYRLSRLLLRLPALRLMNATITEELFFKGLIGNVRIDSVIPHILKMEPADYNSQIIGHSL</sequence>